<evidence type="ECO:0000250" key="1"/>
<evidence type="ECO:0000250" key="2">
    <source>
        <dbReference type="UniProtKB" id="P00157"/>
    </source>
</evidence>
<evidence type="ECO:0000255" key="3">
    <source>
        <dbReference type="PROSITE-ProRule" id="PRU00967"/>
    </source>
</evidence>
<evidence type="ECO:0000255" key="4">
    <source>
        <dbReference type="PROSITE-ProRule" id="PRU00968"/>
    </source>
</evidence>
<organism>
    <name type="scientific">Liomys spectabilis</name>
    <name type="common">Jaliscan spiny pocket mouse</name>
    <name type="synonym">Heteromys spectabilis</name>
    <dbReference type="NCBI Taxonomy" id="348362"/>
    <lineage>
        <taxon>Eukaryota</taxon>
        <taxon>Metazoa</taxon>
        <taxon>Chordata</taxon>
        <taxon>Craniata</taxon>
        <taxon>Vertebrata</taxon>
        <taxon>Euteleostomi</taxon>
        <taxon>Mammalia</taxon>
        <taxon>Eutheria</taxon>
        <taxon>Euarchontoglires</taxon>
        <taxon>Glires</taxon>
        <taxon>Rodentia</taxon>
        <taxon>Castorimorpha</taxon>
        <taxon>Heteromyidae</taxon>
        <taxon>Heteromyinae</taxon>
        <taxon>Heteromys</taxon>
    </lineage>
</organism>
<feature type="chain" id="PRO_0000255065" description="Cytochrome b">
    <location>
        <begin position="1"/>
        <end position="379"/>
    </location>
</feature>
<feature type="transmembrane region" description="Helical" evidence="2">
    <location>
        <begin position="33"/>
        <end position="53"/>
    </location>
</feature>
<feature type="transmembrane region" description="Helical" evidence="2">
    <location>
        <begin position="77"/>
        <end position="98"/>
    </location>
</feature>
<feature type="transmembrane region" description="Helical" evidence="2">
    <location>
        <begin position="113"/>
        <end position="133"/>
    </location>
</feature>
<feature type="transmembrane region" description="Helical" evidence="2">
    <location>
        <begin position="178"/>
        <end position="198"/>
    </location>
</feature>
<feature type="transmembrane region" description="Helical" evidence="2">
    <location>
        <begin position="226"/>
        <end position="246"/>
    </location>
</feature>
<feature type="transmembrane region" description="Helical" evidence="2">
    <location>
        <begin position="288"/>
        <end position="308"/>
    </location>
</feature>
<feature type="transmembrane region" description="Helical" evidence="2">
    <location>
        <begin position="320"/>
        <end position="340"/>
    </location>
</feature>
<feature type="transmembrane region" description="Helical" evidence="2">
    <location>
        <begin position="347"/>
        <end position="367"/>
    </location>
</feature>
<feature type="binding site" description="axial binding residue" evidence="2">
    <location>
        <position position="83"/>
    </location>
    <ligand>
        <name>heme b</name>
        <dbReference type="ChEBI" id="CHEBI:60344"/>
        <label>b562</label>
    </ligand>
    <ligandPart>
        <name>Fe</name>
        <dbReference type="ChEBI" id="CHEBI:18248"/>
    </ligandPart>
</feature>
<feature type="binding site" description="axial binding residue" evidence="2">
    <location>
        <position position="97"/>
    </location>
    <ligand>
        <name>heme b</name>
        <dbReference type="ChEBI" id="CHEBI:60344"/>
        <label>b566</label>
    </ligand>
    <ligandPart>
        <name>Fe</name>
        <dbReference type="ChEBI" id="CHEBI:18248"/>
    </ligandPart>
</feature>
<feature type="binding site" description="axial binding residue" evidence="2">
    <location>
        <position position="182"/>
    </location>
    <ligand>
        <name>heme b</name>
        <dbReference type="ChEBI" id="CHEBI:60344"/>
        <label>b562</label>
    </ligand>
    <ligandPart>
        <name>Fe</name>
        <dbReference type="ChEBI" id="CHEBI:18248"/>
    </ligandPart>
</feature>
<feature type="binding site" description="axial binding residue" evidence="2">
    <location>
        <position position="196"/>
    </location>
    <ligand>
        <name>heme b</name>
        <dbReference type="ChEBI" id="CHEBI:60344"/>
        <label>b566</label>
    </ligand>
    <ligandPart>
        <name>Fe</name>
        <dbReference type="ChEBI" id="CHEBI:18248"/>
    </ligandPart>
</feature>
<feature type="binding site" evidence="2">
    <location>
        <position position="201"/>
    </location>
    <ligand>
        <name>a ubiquinone</name>
        <dbReference type="ChEBI" id="CHEBI:16389"/>
    </ligand>
</feature>
<feature type="sequence variant" description="In strain: Isolate TCWC42413.">
    <original>A</original>
    <variation>T</variation>
    <location>
        <position position="23"/>
    </location>
</feature>
<name>CYB_LIOSE</name>
<comment type="function">
    <text evidence="2">Component of the ubiquinol-cytochrome c reductase complex (complex III or cytochrome b-c1 complex) that is part of the mitochondrial respiratory chain. The b-c1 complex mediates electron transfer from ubiquinol to cytochrome c. Contributes to the generation of a proton gradient across the mitochondrial membrane that is then used for ATP synthesis.</text>
</comment>
<comment type="cofactor">
    <cofactor evidence="2">
        <name>heme b</name>
        <dbReference type="ChEBI" id="CHEBI:60344"/>
    </cofactor>
    <text evidence="2">Binds 2 heme b groups non-covalently.</text>
</comment>
<comment type="subunit">
    <text evidence="2">The cytochrome bc1 complex contains 11 subunits: 3 respiratory subunits (MT-CYB, CYC1 and UQCRFS1), 2 core proteins (UQCRC1 and UQCRC2) and 6 low-molecular weight proteins (UQCRH/QCR6, UQCRB/QCR7, UQCRQ/QCR8, UQCR10/QCR9, UQCR11/QCR10 and a cleavage product of UQCRFS1). This cytochrome bc1 complex then forms a dimer.</text>
</comment>
<comment type="subcellular location">
    <subcellularLocation>
        <location evidence="2">Mitochondrion inner membrane</location>
        <topology evidence="2">Multi-pass membrane protein</topology>
    </subcellularLocation>
</comment>
<comment type="miscellaneous">
    <text evidence="1">Heme 1 (or BL or b562) is low-potential and absorbs at about 562 nm, and heme 2 (or BH or b566) is high-potential and absorbs at about 566 nm.</text>
</comment>
<comment type="similarity">
    <text evidence="3 4">Belongs to the cytochrome b family.</text>
</comment>
<comment type="caution">
    <text evidence="2">The full-length protein contains only eight transmembrane helices, not nine as predicted by bioinformatics tools.</text>
</comment>
<protein>
    <recommendedName>
        <fullName>Cytochrome b</fullName>
    </recommendedName>
    <alternativeName>
        <fullName>Complex III subunit 3</fullName>
    </alternativeName>
    <alternativeName>
        <fullName>Complex III subunit III</fullName>
    </alternativeName>
    <alternativeName>
        <fullName>Cytochrome b-c1 complex subunit 3</fullName>
    </alternativeName>
    <alternativeName>
        <fullName>Ubiquinol-cytochrome-c reductase complex cytochrome b subunit</fullName>
    </alternativeName>
</protein>
<sequence>MKIMRKTHPLMKMVNHAFIDLPAPVNISGWWNFGSLIGLCLIIQIASGLFLAMHYTADTTTAFSSVAHICRDVNYGWLIRSMHANGASLFFVCLYLHIGRGIYYGSYLYKETWNVGILLLFMVMATAFMGYVLPWGQMSFWGATVITNLLSAIPYIGPDLVEWIWGGFSVDKATLTRFFAFHFILPFIIAAMAMVHLLFLHETGSNNPLGIPSNCDKIPFHPYYTFKDLLGVMILLGLYLTLVLFFPDLLGDPDNYMPANPLNTPPHIKPEWYFLFAYAILRSIPNKLGGVIALVLSILVLALFPLLHTSNQRSLTFRPISQFLFWILVSDLFILTWIGGQPVEPPFIMIGQVASILYFSIILILLPIAGLIENKILKW</sequence>
<reference key="1">
    <citation type="journal article" date="2005" name="J. Mammal.">
        <title>Phylogenetics of spiny pocket mice (genus Liomys): analysis of cytochrome b based on multiple heuristic approaches.</title>
        <authorList>
            <person name="Rogers D.S."/>
            <person name="Vance V.L."/>
        </authorList>
    </citation>
    <scope>NUCLEOTIDE SEQUENCE [GENOMIC DNA]</scope>
    <source>
        <strain>Isolate TCWC42405</strain>
        <strain>Isolate TCWC42412</strain>
        <strain>Isolate TCWC42413</strain>
        <strain>Isolate TCWC42414</strain>
    </source>
</reference>
<keyword id="KW-0249">Electron transport</keyword>
<keyword id="KW-0349">Heme</keyword>
<keyword id="KW-0408">Iron</keyword>
<keyword id="KW-0472">Membrane</keyword>
<keyword id="KW-0479">Metal-binding</keyword>
<keyword id="KW-0496">Mitochondrion</keyword>
<keyword id="KW-0999">Mitochondrion inner membrane</keyword>
<keyword id="KW-0679">Respiratory chain</keyword>
<keyword id="KW-0812">Transmembrane</keyword>
<keyword id="KW-1133">Transmembrane helix</keyword>
<keyword id="KW-0813">Transport</keyword>
<keyword id="KW-0830">Ubiquinone</keyword>
<dbReference type="EMBL" id="DQ168547">
    <property type="protein sequence ID" value="ABB82541.1"/>
    <property type="molecule type" value="Genomic_DNA"/>
</dbReference>
<dbReference type="EMBL" id="DQ168548">
    <property type="protein sequence ID" value="ABB82542.1"/>
    <property type="molecule type" value="Genomic_DNA"/>
</dbReference>
<dbReference type="EMBL" id="DQ168549">
    <property type="protein sequence ID" value="ABB82543.1"/>
    <property type="molecule type" value="Genomic_DNA"/>
</dbReference>
<dbReference type="EMBL" id="DQ168550">
    <property type="protein sequence ID" value="ABB82544.1"/>
    <property type="molecule type" value="Genomic_DNA"/>
</dbReference>
<dbReference type="SMR" id="Q2N2B8"/>
<dbReference type="GO" id="GO:0005743">
    <property type="term" value="C:mitochondrial inner membrane"/>
    <property type="evidence" value="ECO:0007669"/>
    <property type="project" value="UniProtKB-SubCell"/>
</dbReference>
<dbReference type="GO" id="GO:0045275">
    <property type="term" value="C:respiratory chain complex III"/>
    <property type="evidence" value="ECO:0007669"/>
    <property type="project" value="InterPro"/>
</dbReference>
<dbReference type="GO" id="GO:0046872">
    <property type="term" value="F:metal ion binding"/>
    <property type="evidence" value="ECO:0007669"/>
    <property type="project" value="UniProtKB-KW"/>
</dbReference>
<dbReference type="GO" id="GO:0008121">
    <property type="term" value="F:ubiquinol-cytochrome-c reductase activity"/>
    <property type="evidence" value="ECO:0007669"/>
    <property type="project" value="InterPro"/>
</dbReference>
<dbReference type="GO" id="GO:0006122">
    <property type="term" value="P:mitochondrial electron transport, ubiquinol to cytochrome c"/>
    <property type="evidence" value="ECO:0007669"/>
    <property type="project" value="TreeGrafter"/>
</dbReference>
<dbReference type="CDD" id="cd00290">
    <property type="entry name" value="cytochrome_b_C"/>
    <property type="match status" value="1"/>
</dbReference>
<dbReference type="CDD" id="cd00284">
    <property type="entry name" value="Cytochrome_b_N"/>
    <property type="match status" value="1"/>
</dbReference>
<dbReference type="FunFam" id="1.20.810.10:FF:000002">
    <property type="entry name" value="Cytochrome b"/>
    <property type="match status" value="1"/>
</dbReference>
<dbReference type="Gene3D" id="1.20.810.10">
    <property type="entry name" value="Cytochrome Bc1 Complex, Chain C"/>
    <property type="match status" value="1"/>
</dbReference>
<dbReference type="InterPro" id="IPR005798">
    <property type="entry name" value="Cyt_b/b6_C"/>
</dbReference>
<dbReference type="InterPro" id="IPR036150">
    <property type="entry name" value="Cyt_b/b6_C_sf"/>
</dbReference>
<dbReference type="InterPro" id="IPR005797">
    <property type="entry name" value="Cyt_b/b6_N"/>
</dbReference>
<dbReference type="InterPro" id="IPR027387">
    <property type="entry name" value="Cytb/b6-like_sf"/>
</dbReference>
<dbReference type="InterPro" id="IPR030689">
    <property type="entry name" value="Cytochrome_b"/>
</dbReference>
<dbReference type="InterPro" id="IPR048260">
    <property type="entry name" value="Cytochrome_b_C_euk/bac"/>
</dbReference>
<dbReference type="InterPro" id="IPR048259">
    <property type="entry name" value="Cytochrome_b_N_euk/bac"/>
</dbReference>
<dbReference type="InterPro" id="IPR016174">
    <property type="entry name" value="Di-haem_cyt_TM"/>
</dbReference>
<dbReference type="PANTHER" id="PTHR19271">
    <property type="entry name" value="CYTOCHROME B"/>
    <property type="match status" value="1"/>
</dbReference>
<dbReference type="PANTHER" id="PTHR19271:SF16">
    <property type="entry name" value="CYTOCHROME B"/>
    <property type="match status" value="1"/>
</dbReference>
<dbReference type="Pfam" id="PF00032">
    <property type="entry name" value="Cytochrom_B_C"/>
    <property type="match status" value="1"/>
</dbReference>
<dbReference type="Pfam" id="PF00033">
    <property type="entry name" value="Cytochrome_B"/>
    <property type="match status" value="1"/>
</dbReference>
<dbReference type="PIRSF" id="PIRSF038885">
    <property type="entry name" value="COB"/>
    <property type="match status" value="1"/>
</dbReference>
<dbReference type="SUPFAM" id="SSF81648">
    <property type="entry name" value="a domain/subunit of cytochrome bc1 complex (Ubiquinol-cytochrome c reductase)"/>
    <property type="match status" value="1"/>
</dbReference>
<dbReference type="SUPFAM" id="SSF81342">
    <property type="entry name" value="Transmembrane di-heme cytochromes"/>
    <property type="match status" value="1"/>
</dbReference>
<dbReference type="PROSITE" id="PS51003">
    <property type="entry name" value="CYTB_CTER"/>
    <property type="match status" value="1"/>
</dbReference>
<dbReference type="PROSITE" id="PS51002">
    <property type="entry name" value="CYTB_NTER"/>
    <property type="match status" value="1"/>
</dbReference>
<proteinExistence type="inferred from homology"/>
<gene>
    <name type="primary">MT-CYB</name>
    <name type="synonym">COB</name>
    <name type="synonym">CYTB</name>
    <name type="synonym">MTCYB</name>
</gene>
<geneLocation type="mitochondrion"/>
<accession>Q2N2B8</accession>
<accession>Q2N2B9</accession>